<proteinExistence type="inferred from homology"/>
<dbReference type="EC" id="3.5.1.9" evidence="1"/>
<dbReference type="EMBL" id="AM167904">
    <property type="protein sequence ID" value="CAJ50016.1"/>
    <property type="molecule type" value="Genomic_DNA"/>
</dbReference>
<dbReference type="RefSeq" id="WP_012418067.1">
    <property type="nucleotide sequence ID" value="NC_010645.1"/>
</dbReference>
<dbReference type="SMR" id="Q2KXW3"/>
<dbReference type="STRING" id="360910.BAV2406"/>
<dbReference type="KEGG" id="bav:BAV2406"/>
<dbReference type="eggNOG" id="COG1878">
    <property type="taxonomic scope" value="Bacteria"/>
</dbReference>
<dbReference type="HOGENOM" id="CLU_030671_3_1_4"/>
<dbReference type="OrthoDB" id="9796085at2"/>
<dbReference type="UniPathway" id="UPA00333">
    <property type="reaction ID" value="UER00454"/>
</dbReference>
<dbReference type="Proteomes" id="UP000001977">
    <property type="component" value="Chromosome"/>
</dbReference>
<dbReference type="GO" id="GO:0004061">
    <property type="term" value="F:arylformamidase activity"/>
    <property type="evidence" value="ECO:0000250"/>
    <property type="project" value="UniProtKB"/>
</dbReference>
<dbReference type="GO" id="GO:0004328">
    <property type="term" value="F:formamidase activity"/>
    <property type="evidence" value="ECO:0007669"/>
    <property type="project" value="InterPro"/>
</dbReference>
<dbReference type="GO" id="GO:0008270">
    <property type="term" value="F:zinc ion binding"/>
    <property type="evidence" value="ECO:0007669"/>
    <property type="project" value="UniProtKB-UniRule"/>
</dbReference>
<dbReference type="GO" id="GO:0043420">
    <property type="term" value="P:anthranilate metabolic process"/>
    <property type="evidence" value="ECO:0000250"/>
    <property type="project" value="UniProtKB"/>
</dbReference>
<dbReference type="GO" id="GO:0019441">
    <property type="term" value="P:L-tryptophan catabolic process to kynurenine"/>
    <property type="evidence" value="ECO:0000250"/>
    <property type="project" value="UniProtKB"/>
</dbReference>
<dbReference type="FunFam" id="3.50.30.50:FF:000001">
    <property type="entry name" value="Kynurenine formamidase"/>
    <property type="match status" value="1"/>
</dbReference>
<dbReference type="Gene3D" id="3.50.30.50">
    <property type="entry name" value="Putative cyclase"/>
    <property type="match status" value="1"/>
</dbReference>
<dbReference type="HAMAP" id="MF_01969">
    <property type="entry name" value="KynB"/>
    <property type="match status" value="1"/>
</dbReference>
<dbReference type="InterPro" id="IPR007325">
    <property type="entry name" value="KFase/CYL"/>
</dbReference>
<dbReference type="InterPro" id="IPR037175">
    <property type="entry name" value="KFase_sf"/>
</dbReference>
<dbReference type="InterPro" id="IPR017484">
    <property type="entry name" value="Kynurenine_formamidase_bac"/>
</dbReference>
<dbReference type="NCBIfam" id="TIGR03035">
    <property type="entry name" value="trp_arylform"/>
    <property type="match status" value="1"/>
</dbReference>
<dbReference type="PANTHER" id="PTHR31118">
    <property type="entry name" value="CYCLASE-LIKE PROTEIN 2"/>
    <property type="match status" value="1"/>
</dbReference>
<dbReference type="PANTHER" id="PTHR31118:SF32">
    <property type="entry name" value="KYNURENINE FORMAMIDASE"/>
    <property type="match status" value="1"/>
</dbReference>
<dbReference type="Pfam" id="PF04199">
    <property type="entry name" value="Cyclase"/>
    <property type="match status" value="1"/>
</dbReference>
<dbReference type="SUPFAM" id="SSF102198">
    <property type="entry name" value="Putative cyclase"/>
    <property type="match status" value="1"/>
</dbReference>
<evidence type="ECO:0000255" key="1">
    <source>
        <dbReference type="HAMAP-Rule" id="MF_01969"/>
    </source>
</evidence>
<sequence length="209" mass="22941">MKRLWDISPPISSQSPVFPGDTPYRQQWKWQLSPECPVNVSEITMSPHIGAHADAPLHYANGATAAGCLPLEPFLGPCRVIHALDCGPLILPEHLAHAADDMPERVLVRTAQHAAVHWWTDDFSAYAPQTIEWLASLGVRLIGIDTPSIDPATSKTLDSHHVILRRDIRVLENLVLDTVEPGDYELIALPLALVQADASPVRAVLRELG</sequence>
<organism>
    <name type="scientific">Bordetella avium (strain 197N)</name>
    <dbReference type="NCBI Taxonomy" id="360910"/>
    <lineage>
        <taxon>Bacteria</taxon>
        <taxon>Pseudomonadati</taxon>
        <taxon>Pseudomonadota</taxon>
        <taxon>Betaproteobacteria</taxon>
        <taxon>Burkholderiales</taxon>
        <taxon>Alcaligenaceae</taxon>
        <taxon>Bordetella</taxon>
    </lineage>
</organism>
<keyword id="KW-0378">Hydrolase</keyword>
<keyword id="KW-0479">Metal-binding</keyword>
<keyword id="KW-1185">Reference proteome</keyword>
<keyword id="KW-0823">Tryptophan catabolism</keyword>
<keyword id="KW-0862">Zinc</keyword>
<feature type="chain" id="PRO_0000362095" description="Kynurenine formamidase">
    <location>
        <begin position="1"/>
        <end position="209"/>
    </location>
</feature>
<feature type="active site" description="Proton donor/acceptor" evidence="1">
    <location>
        <position position="58"/>
    </location>
</feature>
<feature type="binding site" evidence="1">
    <location>
        <position position="18"/>
    </location>
    <ligand>
        <name>substrate</name>
    </ligand>
</feature>
<feature type="binding site" evidence="1">
    <location>
        <position position="48"/>
    </location>
    <ligand>
        <name>Zn(2+)</name>
        <dbReference type="ChEBI" id="CHEBI:29105"/>
        <label>1</label>
    </ligand>
</feature>
<feature type="binding site" evidence="1">
    <location>
        <position position="52"/>
    </location>
    <ligand>
        <name>Zn(2+)</name>
        <dbReference type="ChEBI" id="CHEBI:29105"/>
        <label>1</label>
    </ligand>
</feature>
<feature type="binding site" evidence="1">
    <location>
        <position position="54"/>
    </location>
    <ligand>
        <name>Zn(2+)</name>
        <dbReference type="ChEBI" id="CHEBI:29105"/>
        <label>1</label>
    </ligand>
</feature>
<feature type="binding site" evidence="1">
    <location>
        <position position="54"/>
    </location>
    <ligand>
        <name>Zn(2+)</name>
        <dbReference type="ChEBI" id="CHEBI:29105"/>
        <label>2</label>
    </ligand>
</feature>
<feature type="binding site" evidence="1">
    <location>
        <position position="160"/>
    </location>
    <ligand>
        <name>Zn(2+)</name>
        <dbReference type="ChEBI" id="CHEBI:29105"/>
        <label>2</label>
    </ligand>
</feature>
<feature type="binding site" evidence="1">
    <location>
        <position position="172"/>
    </location>
    <ligand>
        <name>Zn(2+)</name>
        <dbReference type="ChEBI" id="CHEBI:29105"/>
        <label>1</label>
    </ligand>
</feature>
<feature type="binding site" evidence="1">
    <location>
        <position position="172"/>
    </location>
    <ligand>
        <name>Zn(2+)</name>
        <dbReference type="ChEBI" id="CHEBI:29105"/>
        <label>2</label>
    </ligand>
</feature>
<comment type="function">
    <text evidence="1">Catalyzes the hydrolysis of N-formyl-L-kynurenine to L-kynurenine, the second step in the kynurenine pathway of tryptophan degradation.</text>
</comment>
<comment type="catalytic activity">
    <reaction evidence="1">
        <text>N-formyl-L-kynurenine + H2O = L-kynurenine + formate + H(+)</text>
        <dbReference type="Rhea" id="RHEA:13009"/>
        <dbReference type="ChEBI" id="CHEBI:15377"/>
        <dbReference type="ChEBI" id="CHEBI:15378"/>
        <dbReference type="ChEBI" id="CHEBI:15740"/>
        <dbReference type="ChEBI" id="CHEBI:57959"/>
        <dbReference type="ChEBI" id="CHEBI:58629"/>
        <dbReference type="EC" id="3.5.1.9"/>
    </reaction>
</comment>
<comment type="cofactor">
    <cofactor evidence="1">
        <name>Zn(2+)</name>
        <dbReference type="ChEBI" id="CHEBI:29105"/>
    </cofactor>
    <text evidence="1">Binds 2 zinc ions per subunit.</text>
</comment>
<comment type="pathway">
    <text evidence="1">Amino-acid degradation; L-tryptophan degradation via kynurenine pathway; L-kynurenine from L-tryptophan: step 2/2.</text>
</comment>
<comment type="subunit">
    <text evidence="1">Homodimer.</text>
</comment>
<comment type="similarity">
    <text evidence="1">Belongs to the Cyclase 1 superfamily. KynB family.</text>
</comment>
<protein>
    <recommendedName>
        <fullName evidence="1">Kynurenine formamidase</fullName>
        <shortName evidence="1">KFA</shortName>
        <shortName evidence="1">KFase</shortName>
        <ecNumber evidence="1">3.5.1.9</ecNumber>
    </recommendedName>
    <alternativeName>
        <fullName evidence="1">Arylformamidase</fullName>
    </alternativeName>
    <alternativeName>
        <fullName evidence="1">N-formylkynurenine formamidase</fullName>
        <shortName evidence="1">FKF</shortName>
    </alternativeName>
</protein>
<name>KYNB_BORA1</name>
<accession>Q2KXW3</accession>
<reference key="1">
    <citation type="journal article" date="2006" name="J. Bacteriol.">
        <title>Comparison of the genome sequence of the poultry pathogen Bordetella avium with those of B. bronchiseptica, B. pertussis, and B. parapertussis reveals extensive diversity in surface structures associated with host interaction.</title>
        <authorList>
            <person name="Sebaihia M."/>
            <person name="Preston A."/>
            <person name="Maskell D.J."/>
            <person name="Kuzmiak H."/>
            <person name="Connell T.D."/>
            <person name="King N.D."/>
            <person name="Orndorff P.E."/>
            <person name="Miyamoto D.M."/>
            <person name="Thomson N.R."/>
            <person name="Harris D."/>
            <person name="Goble A."/>
            <person name="Lord A."/>
            <person name="Murphy L."/>
            <person name="Quail M.A."/>
            <person name="Rutter S."/>
            <person name="Squares R."/>
            <person name="Squares S."/>
            <person name="Woodward J."/>
            <person name="Parkhill J."/>
            <person name="Temple L.M."/>
        </authorList>
    </citation>
    <scope>NUCLEOTIDE SEQUENCE [LARGE SCALE GENOMIC DNA]</scope>
    <source>
        <strain>197N</strain>
    </source>
</reference>
<gene>
    <name evidence="1" type="primary">kynB</name>
    <name type="ordered locus">BAV2406</name>
</gene>